<comment type="subunit">
    <text evidence="1">Part of the 30S ribosomal subunit.</text>
</comment>
<comment type="similarity">
    <text evidence="1">Belongs to the eukaryotic ribosomal protein eS8 family.</text>
</comment>
<dbReference type="EMBL" id="CP001338">
    <property type="protein sequence ID" value="ACL15718.1"/>
    <property type="molecule type" value="Genomic_DNA"/>
</dbReference>
<dbReference type="RefSeq" id="WP_012617037.1">
    <property type="nucleotide sequence ID" value="NC_011832.1"/>
</dbReference>
<dbReference type="SMR" id="B8GJR4"/>
<dbReference type="STRING" id="521011.Mpal_0336"/>
<dbReference type="GeneID" id="7272640"/>
<dbReference type="KEGG" id="mpl:Mpal_0336"/>
<dbReference type="eggNOG" id="arCOG04154">
    <property type="taxonomic scope" value="Archaea"/>
</dbReference>
<dbReference type="HOGENOM" id="CLU_080597_2_1_2"/>
<dbReference type="OrthoDB" id="372305at2157"/>
<dbReference type="Proteomes" id="UP000002457">
    <property type="component" value="Chromosome"/>
</dbReference>
<dbReference type="GO" id="GO:1990904">
    <property type="term" value="C:ribonucleoprotein complex"/>
    <property type="evidence" value="ECO:0007669"/>
    <property type="project" value="UniProtKB-KW"/>
</dbReference>
<dbReference type="GO" id="GO:0005840">
    <property type="term" value="C:ribosome"/>
    <property type="evidence" value="ECO:0007669"/>
    <property type="project" value="UniProtKB-KW"/>
</dbReference>
<dbReference type="GO" id="GO:0003735">
    <property type="term" value="F:structural constituent of ribosome"/>
    <property type="evidence" value="ECO:0007669"/>
    <property type="project" value="InterPro"/>
</dbReference>
<dbReference type="GO" id="GO:0006412">
    <property type="term" value="P:translation"/>
    <property type="evidence" value="ECO:0007669"/>
    <property type="project" value="UniProtKB-UniRule"/>
</dbReference>
<dbReference type="CDD" id="cd11382">
    <property type="entry name" value="Ribosomal_S8e"/>
    <property type="match status" value="1"/>
</dbReference>
<dbReference type="Gene3D" id="3.10.290.70">
    <property type="match status" value="1"/>
</dbReference>
<dbReference type="HAMAP" id="MF_00029">
    <property type="entry name" value="Ribosomal_eS8"/>
    <property type="match status" value="1"/>
</dbReference>
<dbReference type="InterPro" id="IPR001047">
    <property type="entry name" value="Ribosomal_eS8"/>
</dbReference>
<dbReference type="InterPro" id="IPR018283">
    <property type="entry name" value="Ribosomal_eS8_CS"/>
</dbReference>
<dbReference type="InterPro" id="IPR020919">
    <property type="entry name" value="Ribosomal_protein_eS8_arc"/>
</dbReference>
<dbReference type="InterPro" id="IPR022309">
    <property type="entry name" value="Ribosomal_Se8/biogenesis_NSA2"/>
</dbReference>
<dbReference type="NCBIfam" id="TIGR00307">
    <property type="entry name" value="eS8"/>
    <property type="match status" value="1"/>
</dbReference>
<dbReference type="PANTHER" id="PTHR10394">
    <property type="entry name" value="40S RIBOSOMAL PROTEIN S8"/>
    <property type="match status" value="1"/>
</dbReference>
<dbReference type="Pfam" id="PF01201">
    <property type="entry name" value="Ribosomal_S8e"/>
    <property type="match status" value="1"/>
</dbReference>
<dbReference type="PROSITE" id="PS01193">
    <property type="entry name" value="RIBOSOMAL_S8E"/>
    <property type="match status" value="1"/>
</dbReference>
<reference key="1">
    <citation type="journal article" date="2015" name="Genome Announc.">
        <title>Complete Genome Sequence of Methanosphaerula palustris E1-9CT, a Hydrogenotrophic Methanogen Isolated from a Minerotrophic Fen Peatland.</title>
        <authorList>
            <person name="Cadillo-Quiroz H."/>
            <person name="Browne P."/>
            <person name="Kyrpides N."/>
            <person name="Woyke T."/>
            <person name="Goodwin L."/>
            <person name="Detter C."/>
            <person name="Yavitt J.B."/>
            <person name="Zinder S.H."/>
        </authorList>
    </citation>
    <scope>NUCLEOTIDE SEQUENCE [LARGE SCALE GENOMIC DNA]</scope>
    <source>
        <strain>ATCC BAA-1556 / DSM 19958 / E1-9c</strain>
    </source>
</reference>
<name>RS8E_METPE</name>
<gene>
    <name evidence="1" type="primary">rps8e</name>
    <name type="ordered locus">Mpal_0336</name>
</gene>
<accession>B8GJR4</accession>
<feature type="chain" id="PRO_1000116914" description="Small ribosomal subunit protein eS8">
    <location>
        <begin position="1"/>
        <end position="125"/>
    </location>
</feature>
<sequence>MLWQGKSIRKVTGGRYAPLRGKRRTEIGKAPAETHIGVDRKKMVRTFGGNVKVRALRATFASVANRSTGVCKQVKIETVEENSANPNYVRRNLLTKGAIIRTELGRARIMSRPGQDGVINAVLVE</sequence>
<proteinExistence type="inferred from homology"/>
<keyword id="KW-1185">Reference proteome</keyword>
<keyword id="KW-0687">Ribonucleoprotein</keyword>
<keyword id="KW-0689">Ribosomal protein</keyword>
<evidence type="ECO:0000255" key="1">
    <source>
        <dbReference type="HAMAP-Rule" id="MF_00029"/>
    </source>
</evidence>
<evidence type="ECO:0000305" key="2"/>
<protein>
    <recommendedName>
        <fullName evidence="1">Small ribosomal subunit protein eS8</fullName>
    </recommendedName>
    <alternativeName>
        <fullName evidence="2">30S ribosomal protein S8e</fullName>
    </alternativeName>
</protein>
<organism>
    <name type="scientific">Methanosphaerula palustris (strain ATCC BAA-1556 / DSM 19958 / E1-9c)</name>
    <dbReference type="NCBI Taxonomy" id="521011"/>
    <lineage>
        <taxon>Archaea</taxon>
        <taxon>Methanobacteriati</taxon>
        <taxon>Methanobacteriota</taxon>
        <taxon>Stenosarchaea group</taxon>
        <taxon>Methanomicrobia</taxon>
        <taxon>Methanomicrobiales</taxon>
        <taxon>Methanoregulaceae</taxon>
        <taxon>Methanosphaerula</taxon>
    </lineage>
</organism>